<protein>
    <recommendedName>
        <fullName evidence="1">Large ribosomal subunit protein bL34</fullName>
    </recommendedName>
    <alternativeName>
        <fullName evidence="3">50S ribosomal protein L34</fullName>
    </alternativeName>
</protein>
<accession>P66249</accession>
<accession>Q926Q3</accession>
<sequence length="44" mass="5299">MKRTYQPSKRKRKKVHGFRTRMSTKNGRRVLASRRRKGRKVLSA</sequence>
<keyword id="KW-0687">Ribonucleoprotein</keyword>
<keyword id="KW-0689">Ribosomal protein</keyword>
<comment type="similarity">
    <text evidence="1">Belongs to the bacterial ribosomal protein bL34 family.</text>
</comment>
<evidence type="ECO:0000255" key="1">
    <source>
        <dbReference type="HAMAP-Rule" id="MF_00391"/>
    </source>
</evidence>
<evidence type="ECO:0000256" key="2">
    <source>
        <dbReference type="SAM" id="MobiDB-lite"/>
    </source>
</evidence>
<evidence type="ECO:0000305" key="3"/>
<organism>
    <name type="scientific">Listeria innocua serovar 6a (strain ATCC BAA-680 / CLIP 11262)</name>
    <dbReference type="NCBI Taxonomy" id="272626"/>
    <lineage>
        <taxon>Bacteria</taxon>
        <taxon>Bacillati</taxon>
        <taxon>Bacillota</taxon>
        <taxon>Bacilli</taxon>
        <taxon>Bacillales</taxon>
        <taxon>Listeriaceae</taxon>
        <taxon>Listeria</taxon>
    </lineage>
</organism>
<feature type="chain" id="PRO_0000187403" description="Large ribosomal subunit protein bL34">
    <location>
        <begin position="1"/>
        <end position="44"/>
    </location>
</feature>
<feature type="region of interest" description="Disordered" evidence="2">
    <location>
        <begin position="1"/>
        <end position="44"/>
    </location>
</feature>
<feature type="compositionally biased region" description="Basic residues" evidence="2">
    <location>
        <begin position="1"/>
        <end position="19"/>
    </location>
</feature>
<feature type="compositionally biased region" description="Basic residues" evidence="2">
    <location>
        <begin position="26"/>
        <end position="44"/>
    </location>
</feature>
<dbReference type="EMBL" id="AL596174">
    <property type="protein sequence ID" value="CAC98213.1"/>
    <property type="molecule type" value="Genomic_DNA"/>
</dbReference>
<dbReference type="PIR" id="AE1805">
    <property type="entry name" value="AE1805"/>
</dbReference>
<dbReference type="RefSeq" id="WP_003718062.1">
    <property type="nucleotide sequence ID" value="NC_003212.1"/>
</dbReference>
<dbReference type="SMR" id="P66249"/>
<dbReference type="STRING" id="272626.gene:17567375"/>
<dbReference type="GeneID" id="93240767"/>
<dbReference type="KEGG" id="lin:rpmH"/>
<dbReference type="eggNOG" id="COG0230">
    <property type="taxonomic scope" value="Bacteria"/>
</dbReference>
<dbReference type="HOGENOM" id="CLU_129938_2_0_9"/>
<dbReference type="OrthoDB" id="9804164at2"/>
<dbReference type="Proteomes" id="UP000002513">
    <property type="component" value="Chromosome"/>
</dbReference>
<dbReference type="GO" id="GO:1990904">
    <property type="term" value="C:ribonucleoprotein complex"/>
    <property type="evidence" value="ECO:0007669"/>
    <property type="project" value="UniProtKB-KW"/>
</dbReference>
<dbReference type="GO" id="GO:0005840">
    <property type="term" value="C:ribosome"/>
    <property type="evidence" value="ECO:0007669"/>
    <property type="project" value="UniProtKB-KW"/>
</dbReference>
<dbReference type="GO" id="GO:0003735">
    <property type="term" value="F:structural constituent of ribosome"/>
    <property type="evidence" value="ECO:0007669"/>
    <property type="project" value="InterPro"/>
</dbReference>
<dbReference type="GO" id="GO:0006412">
    <property type="term" value="P:translation"/>
    <property type="evidence" value="ECO:0007669"/>
    <property type="project" value="UniProtKB-UniRule"/>
</dbReference>
<dbReference type="FunFam" id="1.10.287.3980:FF:000001">
    <property type="entry name" value="Mitochondrial ribosomal protein L34"/>
    <property type="match status" value="1"/>
</dbReference>
<dbReference type="Gene3D" id="1.10.287.3980">
    <property type="match status" value="1"/>
</dbReference>
<dbReference type="HAMAP" id="MF_00391">
    <property type="entry name" value="Ribosomal_bL34"/>
    <property type="match status" value="1"/>
</dbReference>
<dbReference type="InterPro" id="IPR000271">
    <property type="entry name" value="Ribosomal_bL34"/>
</dbReference>
<dbReference type="InterPro" id="IPR020939">
    <property type="entry name" value="Ribosomal_bL34_CS"/>
</dbReference>
<dbReference type="NCBIfam" id="TIGR01030">
    <property type="entry name" value="rpmH_bact"/>
    <property type="match status" value="1"/>
</dbReference>
<dbReference type="PANTHER" id="PTHR14503:SF4">
    <property type="entry name" value="LARGE RIBOSOMAL SUBUNIT PROTEIN BL34M"/>
    <property type="match status" value="1"/>
</dbReference>
<dbReference type="PANTHER" id="PTHR14503">
    <property type="entry name" value="MITOCHONDRIAL RIBOSOMAL PROTEIN 34 FAMILY MEMBER"/>
    <property type="match status" value="1"/>
</dbReference>
<dbReference type="Pfam" id="PF00468">
    <property type="entry name" value="Ribosomal_L34"/>
    <property type="match status" value="1"/>
</dbReference>
<dbReference type="PROSITE" id="PS00784">
    <property type="entry name" value="RIBOSOMAL_L34"/>
    <property type="match status" value="1"/>
</dbReference>
<proteinExistence type="inferred from homology"/>
<gene>
    <name evidence="1" type="primary">rpmH</name>
    <name type="ordered locus">lin2988</name>
</gene>
<name>RL34_LISIN</name>
<reference key="1">
    <citation type="journal article" date="2001" name="Science">
        <title>Comparative genomics of Listeria species.</title>
        <authorList>
            <person name="Glaser P."/>
            <person name="Frangeul L."/>
            <person name="Buchrieser C."/>
            <person name="Rusniok C."/>
            <person name="Amend A."/>
            <person name="Baquero F."/>
            <person name="Berche P."/>
            <person name="Bloecker H."/>
            <person name="Brandt P."/>
            <person name="Chakraborty T."/>
            <person name="Charbit A."/>
            <person name="Chetouani F."/>
            <person name="Couve E."/>
            <person name="de Daruvar A."/>
            <person name="Dehoux P."/>
            <person name="Domann E."/>
            <person name="Dominguez-Bernal G."/>
            <person name="Duchaud E."/>
            <person name="Durant L."/>
            <person name="Dussurget O."/>
            <person name="Entian K.-D."/>
            <person name="Fsihi H."/>
            <person name="Garcia-del Portillo F."/>
            <person name="Garrido P."/>
            <person name="Gautier L."/>
            <person name="Goebel W."/>
            <person name="Gomez-Lopez N."/>
            <person name="Hain T."/>
            <person name="Hauf J."/>
            <person name="Jackson D."/>
            <person name="Jones L.-M."/>
            <person name="Kaerst U."/>
            <person name="Kreft J."/>
            <person name="Kuhn M."/>
            <person name="Kunst F."/>
            <person name="Kurapkat G."/>
            <person name="Madueno E."/>
            <person name="Maitournam A."/>
            <person name="Mata Vicente J."/>
            <person name="Ng E."/>
            <person name="Nedjari H."/>
            <person name="Nordsiek G."/>
            <person name="Novella S."/>
            <person name="de Pablos B."/>
            <person name="Perez-Diaz J.-C."/>
            <person name="Purcell R."/>
            <person name="Remmel B."/>
            <person name="Rose M."/>
            <person name="Schlueter T."/>
            <person name="Simoes N."/>
            <person name="Tierrez A."/>
            <person name="Vazquez-Boland J.-A."/>
            <person name="Voss H."/>
            <person name="Wehland J."/>
            <person name="Cossart P."/>
        </authorList>
    </citation>
    <scope>NUCLEOTIDE SEQUENCE [LARGE SCALE GENOMIC DNA]</scope>
    <source>
        <strain>ATCC BAA-680 / CLIP 11262</strain>
    </source>
</reference>